<proteinExistence type="evidence at protein level"/>
<keyword id="KW-1017">Isopeptide bond</keyword>
<keyword id="KW-0520">NAD</keyword>
<keyword id="KW-0560">Oxidoreductase</keyword>
<keyword id="KW-1185">Reference proteome</keyword>
<keyword id="KW-0832">Ubl conjugation</keyword>
<dbReference type="EC" id="1.1.1.-"/>
<dbReference type="EMBL" id="CP000480">
    <property type="protein sequence ID" value="ABK70855.1"/>
    <property type="molecule type" value="Genomic_DNA"/>
</dbReference>
<dbReference type="EMBL" id="CP001663">
    <property type="protein sequence ID" value="AFP42305.1"/>
    <property type="molecule type" value="Genomic_DNA"/>
</dbReference>
<dbReference type="RefSeq" id="WP_011730987.1">
    <property type="nucleotide sequence ID" value="NZ_SIJM01000017.1"/>
</dbReference>
<dbReference type="RefSeq" id="YP_890256.1">
    <property type="nucleotide sequence ID" value="NC_008596.1"/>
</dbReference>
<dbReference type="SMR" id="A0R518"/>
<dbReference type="STRING" id="246196.MSMEG_6031"/>
<dbReference type="PaxDb" id="246196-MSMEI_5872"/>
<dbReference type="KEGG" id="msb:LJ00_29825"/>
<dbReference type="KEGG" id="msg:MSMEI_5872"/>
<dbReference type="KEGG" id="msm:MSMEG_6031"/>
<dbReference type="PATRIC" id="fig|246196.19.peg.5869"/>
<dbReference type="eggNOG" id="COG1028">
    <property type="taxonomic scope" value="Bacteria"/>
</dbReference>
<dbReference type="OrthoDB" id="5173603at2"/>
<dbReference type="Proteomes" id="UP000000757">
    <property type="component" value="Chromosome"/>
</dbReference>
<dbReference type="Proteomes" id="UP000006158">
    <property type="component" value="Chromosome"/>
</dbReference>
<dbReference type="GO" id="GO:0016616">
    <property type="term" value="F:oxidoreductase activity, acting on the CH-OH group of donors, NAD or NADP as acceptor"/>
    <property type="evidence" value="ECO:0007669"/>
    <property type="project" value="TreeGrafter"/>
</dbReference>
<dbReference type="CDD" id="cd05233">
    <property type="entry name" value="SDR_c"/>
    <property type="match status" value="1"/>
</dbReference>
<dbReference type="FunFam" id="3.40.50.720:FF:000084">
    <property type="entry name" value="Short-chain dehydrogenase reductase"/>
    <property type="match status" value="1"/>
</dbReference>
<dbReference type="Gene3D" id="3.40.50.720">
    <property type="entry name" value="NAD(P)-binding Rossmann-like Domain"/>
    <property type="match status" value="1"/>
</dbReference>
<dbReference type="InterPro" id="IPR036291">
    <property type="entry name" value="NAD(P)-bd_dom_sf"/>
</dbReference>
<dbReference type="InterPro" id="IPR002347">
    <property type="entry name" value="SDR_fam"/>
</dbReference>
<dbReference type="InterPro" id="IPR023985">
    <property type="entry name" value="SDR_subfam_1"/>
</dbReference>
<dbReference type="NCBIfam" id="NF009467">
    <property type="entry name" value="PRK12826.1-3"/>
    <property type="match status" value="1"/>
</dbReference>
<dbReference type="NCBIfam" id="TIGR03971">
    <property type="entry name" value="SDR_subfam_1"/>
    <property type="match status" value="1"/>
</dbReference>
<dbReference type="PANTHER" id="PTHR42760:SF133">
    <property type="entry name" value="3-OXOACYL-[ACYL-CARRIER-PROTEIN] REDUCTASE"/>
    <property type="match status" value="1"/>
</dbReference>
<dbReference type="PANTHER" id="PTHR42760">
    <property type="entry name" value="SHORT-CHAIN DEHYDROGENASES/REDUCTASES FAMILY MEMBER"/>
    <property type="match status" value="1"/>
</dbReference>
<dbReference type="Pfam" id="PF13561">
    <property type="entry name" value="adh_short_C2"/>
    <property type="match status" value="1"/>
</dbReference>
<dbReference type="PRINTS" id="PR00081">
    <property type="entry name" value="GDHRDH"/>
</dbReference>
<dbReference type="PRINTS" id="PR00080">
    <property type="entry name" value="SDRFAMILY"/>
</dbReference>
<dbReference type="SUPFAM" id="SSF51735">
    <property type="entry name" value="NAD(P)-binding Rossmann-fold domains"/>
    <property type="match status" value="1"/>
</dbReference>
<name>Y6031_MYCS2</name>
<protein>
    <recommendedName>
        <fullName>Putative short-chain type dehydrogenase/reductase MSMEG_6031/MSMEI_5872</fullName>
        <ecNumber>1.1.1.-</ecNumber>
    </recommendedName>
</protein>
<sequence length="279" mass="29442">MAGRVEGKVAFITGAARGQGRSHAVRLAEEGADIIAVDVCRRISSNEDIPASTPEDLAETVELVKGLNRRIVAEEVDVRDYDALKAVVDSGVEQLGGLDIVVANAGIGNGGATLDKTSEADWDDMIGVNLSGVWKTVKAAVPHLISGGNGGSIILTSSVGGLKAYPHTGHYIAAKHGVVGLMRTFAVELGQHSIRVNSVHPTNVNTPLFMNEGTMKLFRPDLENPGPDDMAVVAQMMHVLPVGWVEPRDISNAVLFLASDEARYVTGLPMTVDAGSMLK</sequence>
<reference key="1">
    <citation type="submission" date="2006-10" db="EMBL/GenBank/DDBJ databases">
        <authorList>
            <person name="Fleischmann R.D."/>
            <person name="Dodson R.J."/>
            <person name="Haft D.H."/>
            <person name="Merkel J.S."/>
            <person name="Nelson W.C."/>
            <person name="Fraser C.M."/>
        </authorList>
    </citation>
    <scope>NUCLEOTIDE SEQUENCE [LARGE SCALE GENOMIC DNA]</scope>
    <source>
        <strain>ATCC 700084 / mc(2)155</strain>
    </source>
</reference>
<reference key="2">
    <citation type="journal article" date="2007" name="Genome Biol.">
        <title>Interrupted coding sequences in Mycobacterium smegmatis: authentic mutations or sequencing errors?</title>
        <authorList>
            <person name="Deshayes C."/>
            <person name="Perrodou E."/>
            <person name="Gallien S."/>
            <person name="Euphrasie D."/>
            <person name="Schaeffer C."/>
            <person name="Van-Dorsselaer A."/>
            <person name="Poch O."/>
            <person name="Lecompte O."/>
            <person name="Reyrat J.-M."/>
        </authorList>
    </citation>
    <scope>NUCLEOTIDE SEQUENCE [LARGE SCALE GENOMIC DNA]</scope>
    <source>
        <strain>ATCC 700084 / mc(2)155</strain>
    </source>
</reference>
<reference key="3">
    <citation type="journal article" date="2009" name="Genome Res.">
        <title>Ortho-proteogenomics: multiple proteomes investigation through orthology and a new MS-based protocol.</title>
        <authorList>
            <person name="Gallien S."/>
            <person name="Perrodou E."/>
            <person name="Carapito C."/>
            <person name="Deshayes C."/>
            <person name="Reyrat J.-M."/>
            <person name="Van Dorsselaer A."/>
            <person name="Poch O."/>
            <person name="Schaeffer C."/>
            <person name="Lecompte O."/>
        </authorList>
    </citation>
    <scope>NUCLEOTIDE SEQUENCE [LARGE SCALE GENOMIC DNA]</scope>
    <source>
        <strain>ATCC 700084 / mc(2)155</strain>
    </source>
</reference>
<reference key="4">
    <citation type="journal article" date="2010" name="Mol. Biosyst.">
        <title>Expansion of the mycobacterial 'PUPylome'.</title>
        <authorList>
            <person name="Watrous J."/>
            <person name="Burns K."/>
            <person name="Liu W.T."/>
            <person name="Patel A."/>
            <person name="Hook V."/>
            <person name="Bafna V."/>
            <person name="Barry C.E. III"/>
            <person name="Bark S."/>
            <person name="Dorrestein P.C."/>
        </authorList>
    </citation>
    <scope>PUPYLATION AT LYS-65</scope>
    <scope>IDENTIFICATION BY MASS SPECTROMETRY</scope>
</reference>
<gene>
    <name type="ordered locus">MSMEG_6031</name>
    <name type="ordered locus">MSMEI_5872</name>
</gene>
<evidence type="ECO:0000250" key="1"/>
<evidence type="ECO:0000269" key="2">
    <source>
    </source>
</evidence>
<evidence type="ECO:0000305" key="3"/>
<accession>A0R518</accession>
<accession>I7FLX4</accession>
<comment type="similarity">
    <text evidence="3">Belongs to the short-chain dehydrogenases/reductases (SDR) family.</text>
</comment>
<feature type="chain" id="PRO_0000396811" description="Putative short-chain type dehydrogenase/reductase MSMEG_6031/MSMEI_5872">
    <location>
        <begin position="1"/>
        <end position="279"/>
    </location>
</feature>
<feature type="active site" description="Proton acceptor" evidence="1">
    <location>
        <position position="171"/>
    </location>
</feature>
<feature type="binding site" evidence="1">
    <location>
        <begin position="11"/>
        <end position="33"/>
    </location>
    <ligand>
        <name>NAD(+)</name>
        <dbReference type="ChEBI" id="CHEBI:57540"/>
    </ligand>
</feature>
<feature type="binding site" evidence="1">
    <location>
        <position position="158"/>
    </location>
    <ligand>
        <name>substrate</name>
    </ligand>
</feature>
<feature type="cross-link" description="Isoglutamyl lysine isopeptide (Lys-Gln) (interchain with Q-Cter in protein Pup)" evidence="2">
    <location>
        <position position="65"/>
    </location>
</feature>
<organism>
    <name type="scientific">Mycolicibacterium smegmatis (strain ATCC 700084 / mc(2)155)</name>
    <name type="common">Mycobacterium smegmatis</name>
    <dbReference type="NCBI Taxonomy" id="246196"/>
    <lineage>
        <taxon>Bacteria</taxon>
        <taxon>Bacillati</taxon>
        <taxon>Actinomycetota</taxon>
        <taxon>Actinomycetes</taxon>
        <taxon>Mycobacteriales</taxon>
        <taxon>Mycobacteriaceae</taxon>
        <taxon>Mycolicibacterium</taxon>
    </lineage>
</organism>